<sequence length="212" mass="23458">MSTGKFIVIEGMEGAGKSSAIAVIESTLNKHGIEYINTREPGGTPLAESLRDMVKSVDHQEKLTVETELLLMYASRSQLLANKILPALAAGKWVIGDRHDLSSRAYQGGGRGFDETIMNTISDITLKGFRPDITLYLDIDPHIGLSRAKARGDLDRIELEKMEFFIRVHNKYRELAEQDDSIITVDAAQAMLKVHQDVEKAVIGFITNTDKG</sequence>
<reference key="1">
    <citation type="journal article" date="2005" name="Proc. Natl. Acad. Sci. U.S.A.">
        <title>The psychrophilic lifestyle as revealed by the genome sequence of Colwellia psychrerythraea 34H through genomic and proteomic analyses.</title>
        <authorList>
            <person name="Methe B.A."/>
            <person name="Nelson K.E."/>
            <person name="Deming J.W."/>
            <person name="Momen B."/>
            <person name="Melamud E."/>
            <person name="Zhang X."/>
            <person name="Moult J."/>
            <person name="Madupu R."/>
            <person name="Nelson W.C."/>
            <person name="Dodson R.J."/>
            <person name="Brinkac L.M."/>
            <person name="Daugherty S.C."/>
            <person name="Durkin A.S."/>
            <person name="DeBoy R.T."/>
            <person name="Kolonay J.F."/>
            <person name="Sullivan S.A."/>
            <person name="Zhou L."/>
            <person name="Davidsen T.M."/>
            <person name="Wu M."/>
            <person name="Huston A.L."/>
            <person name="Lewis M."/>
            <person name="Weaver B."/>
            <person name="Weidman J.F."/>
            <person name="Khouri H."/>
            <person name="Utterback T.R."/>
            <person name="Feldblyum T.V."/>
            <person name="Fraser C.M."/>
        </authorList>
    </citation>
    <scope>NUCLEOTIDE SEQUENCE [LARGE SCALE GENOMIC DNA]</scope>
    <source>
        <strain>34H / ATCC BAA-681</strain>
    </source>
</reference>
<evidence type="ECO:0000255" key="1">
    <source>
        <dbReference type="HAMAP-Rule" id="MF_00165"/>
    </source>
</evidence>
<proteinExistence type="inferred from homology"/>
<name>KTHY_COLP3</name>
<keyword id="KW-0067">ATP-binding</keyword>
<keyword id="KW-0418">Kinase</keyword>
<keyword id="KW-0545">Nucleotide biosynthesis</keyword>
<keyword id="KW-0547">Nucleotide-binding</keyword>
<keyword id="KW-0808">Transferase</keyword>
<comment type="function">
    <text evidence="1">Phosphorylation of dTMP to form dTDP in both de novo and salvage pathways of dTTP synthesis.</text>
</comment>
<comment type="catalytic activity">
    <reaction evidence="1">
        <text>dTMP + ATP = dTDP + ADP</text>
        <dbReference type="Rhea" id="RHEA:13517"/>
        <dbReference type="ChEBI" id="CHEBI:30616"/>
        <dbReference type="ChEBI" id="CHEBI:58369"/>
        <dbReference type="ChEBI" id="CHEBI:63528"/>
        <dbReference type="ChEBI" id="CHEBI:456216"/>
        <dbReference type="EC" id="2.7.4.9"/>
    </reaction>
</comment>
<comment type="similarity">
    <text evidence="1">Belongs to the thymidylate kinase family.</text>
</comment>
<dbReference type="EC" id="2.7.4.9" evidence="1"/>
<dbReference type="EMBL" id="CP000083">
    <property type="protein sequence ID" value="AAZ25441.1"/>
    <property type="molecule type" value="Genomic_DNA"/>
</dbReference>
<dbReference type="RefSeq" id="WP_011043116.1">
    <property type="nucleotide sequence ID" value="NC_003910.7"/>
</dbReference>
<dbReference type="SMR" id="Q482J5"/>
<dbReference type="STRING" id="167879.CPS_2302"/>
<dbReference type="KEGG" id="cps:CPS_2302"/>
<dbReference type="eggNOG" id="COG0125">
    <property type="taxonomic scope" value="Bacteria"/>
</dbReference>
<dbReference type="HOGENOM" id="CLU_049131_0_1_6"/>
<dbReference type="Proteomes" id="UP000000547">
    <property type="component" value="Chromosome"/>
</dbReference>
<dbReference type="GO" id="GO:0005829">
    <property type="term" value="C:cytosol"/>
    <property type="evidence" value="ECO:0007669"/>
    <property type="project" value="TreeGrafter"/>
</dbReference>
<dbReference type="GO" id="GO:0005524">
    <property type="term" value="F:ATP binding"/>
    <property type="evidence" value="ECO:0007669"/>
    <property type="project" value="UniProtKB-UniRule"/>
</dbReference>
<dbReference type="GO" id="GO:0004798">
    <property type="term" value="F:dTMP kinase activity"/>
    <property type="evidence" value="ECO:0007669"/>
    <property type="project" value="UniProtKB-UniRule"/>
</dbReference>
<dbReference type="GO" id="GO:0006233">
    <property type="term" value="P:dTDP biosynthetic process"/>
    <property type="evidence" value="ECO:0007669"/>
    <property type="project" value="InterPro"/>
</dbReference>
<dbReference type="GO" id="GO:0006235">
    <property type="term" value="P:dTTP biosynthetic process"/>
    <property type="evidence" value="ECO:0007669"/>
    <property type="project" value="UniProtKB-UniRule"/>
</dbReference>
<dbReference type="GO" id="GO:0006227">
    <property type="term" value="P:dUDP biosynthetic process"/>
    <property type="evidence" value="ECO:0007669"/>
    <property type="project" value="TreeGrafter"/>
</dbReference>
<dbReference type="CDD" id="cd01672">
    <property type="entry name" value="TMPK"/>
    <property type="match status" value="1"/>
</dbReference>
<dbReference type="FunFam" id="3.40.50.300:FF:000225">
    <property type="entry name" value="Thymidylate kinase"/>
    <property type="match status" value="1"/>
</dbReference>
<dbReference type="Gene3D" id="3.40.50.300">
    <property type="entry name" value="P-loop containing nucleotide triphosphate hydrolases"/>
    <property type="match status" value="1"/>
</dbReference>
<dbReference type="HAMAP" id="MF_00165">
    <property type="entry name" value="Thymidylate_kinase"/>
    <property type="match status" value="1"/>
</dbReference>
<dbReference type="InterPro" id="IPR027417">
    <property type="entry name" value="P-loop_NTPase"/>
</dbReference>
<dbReference type="InterPro" id="IPR039430">
    <property type="entry name" value="Thymidylate_kin-like_dom"/>
</dbReference>
<dbReference type="InterPro" id="IPR018095">
    <property type="entry name" value="Thymidylate_kin_CS"/>
</dbReference>
<dbReference type="InterPro" id="IPR018094">
    <property type="entry name" value="Thymidylate_kinase"/>
</dbReference>
<dbReference type="NCBIfam" id="TIGR00041">
    <property type="entry name" value="DTMP_kinase"/>
    <property type="match status" value="1"/>
</dbReference>
<dbReference type="PANTHER" id="PTHR10344">
    <property type="entry name" value="THYMIDYLATE KINASE"/>
    <property type="match status" value="1"/>
</dbReference>
<dbReference type="PANTHER" id="PTHR10344:SF4">
    <property type="entry name" value="UMP-CMP KINASE 2, MITOCHONDRIAL"/>
    <property type="match status" value="1"/>
</dbReference>
<dbReference type="Pfam" id="PF02223">
    <property type="entry name" value="Thymidylate_kin"/>
    <property type="match status" value="1"/>
</dbReference>
<dbReference type="SUPFAM" id="SSF52540">
    <property type="entry name" value="P-loop containing nucleoside triphosphate hydrolases"/>
    <property type="match status" value="1"/>
</dbReference>
<dbReference type="PROSITE" id="PS01331">
    <property type="entry name" value="THYMIDYLATE_KINASE"/>
    <property type="match status" value="1"/>
</dbReference>
<accession>Q482J5</accession>
<protein>
    <recommendedName>
        <fullName evidence="1">Thymidylate kinase</fullName>
        <ecNumber evidence="1">2.7.4.9</ecNumber>
    </recommendedName>
    <alternativeName>
        <fullName evidence="1">dTMP kinase</fullName>
    </alternativeName>
</protein>
<organism>
    <name type="scientific">Colwellia psychrerythraea (strain 34H / ATCC BAA-681)</name>
    <name type="common">Vibrio psychroerythus</name>
    <dbReference type="NCBI Taxonomy" id="167879"/>
    <lineage>
        <taxon>Bacteria</taxon>
        <taxon>Pseudomonadati</taxon>
        <taxon>Pseudomonadota</taxon>
        <taxon>Gammaproteobacteria</taxon>
        <taxon>Alteromonadales</taxon>
        <taxon>Colwelliaceae</taxon>
        <taxon>Colwellia</taxon>
    </lineage>
</organism>
<feature type="chain" id="PRO_1000023180" description="Thymidylate kinase">
    <location>
        <begin position="1"/>
        <end position="212"/>
    </location>
</feature>
<feature type="binding site" evidence="1">
    <location>
        <begin position="11"/>
        <end position="18"/>
    </location>
    <ligand>
        <name>ATP</name>
        <dbReference type="ChEBI" id="CHEBI:30616"/>
    </ligand>
</feature>
<gene>
    <name evidence="1" type="primary">tmk</name>
    <name type="ordered locus">CPS_2302</name>
</gene>